<evidence type="ECO:0000250" key="1">
    <source>
        <dbReference type="UniProtKB" id="P62495"/>
    </source>
</evidence>
<evidence type="ECO:0000305" key="2"/>
<gene>
    <name type="primary">ETF1</name>
</gene>
<reference key="1">
    <citation type="submission" date="2006-08" db="EMBL/GenBank/DDBJ databases">
        <authorList>
            <consortium name="NIH - Mammalian Gene Collection (MGC) project"/>
        </authorList>
    </citation>
    <scope>NUCLEOTIDE SEQUENCE [LARGE SCALE MRNA]</scope>
    <source>
        <strain>Hereford</strain>
        <tissue>Brain cortex</tissue>
    </source>
</reference>
<keyword id="KW-0007">Acetylation</keyword>
<keyword id="KW-0963">Cytoplasm</keyword>
<keyword id="KW-0379">Hydroxylation</keyword>
<keyword id="KW-1017">Isopeptide bond</keyword>
<keyword id="KW-0488">Methylation</keyword>
<keyword id="KW-0866">Nonsense-mediated mRNA decay</keyword>
<keyword id="KW-0597">Phosphoprotein</keyword>
<keyword id="KW-0648">Protein biosynthesis</keyword>
<keyword id="KW-1185">Reference proteome</keyword>
<keyword id="KW-0832">Ubl conjugation</keyword>
<accession>Q0VCX5</accession>
<feature type="initiator methionine" description="Removed" evidence="1">
    <location>
        <position position="1"/>
    </location>
</feature>
<feature type="chain" id="PRO_0000266026" description="Eukaryotic peptide chain release factor subunit 1">
    <location>
        <begin position="2"/>
        <end position="437"/>
    </location>
</feature>
<feature type="short sequence motif" description="NIKS motif; plays an important role in translational termination" evidence="1">
    <location>
        <begin position="61"/>
        <end position="64"/>
    </location>
</feature>
<feature type="modified residue" description="N-acetylalanine" evidence="1">
    <location>
        <position position="2"/>
    </location>
</feature>
<feature type="modified residue" description="4-hydroxylysine" evidence="1">
    <location>
        <position position="63"/>
    </location>
</feature>
<feature type="modified residue" description="N5-methylglutamine" evidence="1">
    <location>
        <position position="185"/>
    </location>
</feature>
<feature type="modified residue" description="Phosphothreonine" evidence="1">
    <location>
        <position position="347"/>
    </location>
</feature>
<feature type="cross-link" description="Glycyl lysine isopeptide (Lys-Gly) (interchain with G-Cter in SUMO2)" evidence="1">
    <location>
        <position position="87"/>
    </location>
</feature>
<feature type="cross-link" description="Glycyl lysine isopeptide (Lys-Gly) (interchain with G-Cter in ubiquitin)" evidence="1">
    <location>
        <position position="279"/>
    </location>
</feature>
<feature type="cross-link" description="Glycyl lysine isopeptide (Lys-Gly) (interchain with G-Cter in SUMO2)" evidence="1">
    <location>
        <position position="404"/>
    </location>
</feature>
<sequence length="437" mass="49031">MADDPSAADRNVEIWKIKKLIKSLEAARGNGTSMISLIIPPKDQISRVAKMLADEFGTASNIKSRVNRLSVLGAITSVQQRLKLYNKVPPNGLVVYCGTIVTEEGKEKKVNIDFEPFKPINTSLYLCDNKFHTEALTALLSDDSKFGFIVIDGSGALFGTLQGNTREVLHKFTVDLPKKHGRGGQSALRFARLRMEKRHNYVRKVAETAVQLFISGDKVNVAGLVLAGSADFKTELSQSDMFDQRLQSKVLKLVDISYGGENGFNQAIELSTEVLSNVKFIQEKKLIGRYFDEISQDTGKYCFGVEDTLKALEMGAVEILIVYENLDIMRYVLHCQGTEEEKILYLTPEQEKDKSHFTDKETGQEHELIESMPLLEWFANNYKKFGATLEIVTDKSQEGSQFVKGFGGIGGILRYRVDFQGMEYQGGDDEFFDLDDY</sequence>
<name>ERF1_BOVIN</name>
<dbReference type="EMBL" id="BC119947">
    <property type="protein sequence ID" value="AAI19948.1"/>
    <property type="molecule type" value="mRNA"/>
</dbReference>
<dbReference type="RefSeq" id="NP_001069722.1">
    <property type="nucleotide sequence ID" value="NM_001076254.1"/>
</dbReference>
<dbReference type="RefSeq" id="XP_005209480.1">
    <property type="nucleotide sequence ID" value="XM_005209423.5"/>
</dbReference>
<dbReference type="BMRB" id="Q0VCX5"/>
<dbReference type="SMR" id="Q0VCX5"/>
<dbReference type="FunCoup" id="Q0VCX5">
    <property type="interactions" value="4598"/>
</dbReference>
<dbReference type="STRING" id="9913.ENSBTAP00000035133"/>
<dbReference type="PaxDb" id="9913-ENSBTAP00000035133"/>
<dbReference type="Ensembl" id="ENSBTAT00000035255.3">
    <property type="protein sequence ID" value="ENSBTAP00000035133.2"/>
    <property type="gene ID" value="ENSBTAG00000011415.7"/>
</dbReference>
<dbReference type="GeneID" id="541077"/>
<dbReference type="KEGG" id="bta:541077"/>
<dbReference type="CTD" id="2107"/>
<dbReference type="VEuPathDB" id="HostDB:ENSBTAG00000011415"/>
<dbReference type="VGNC" id="VGNC:28617">
    <property type="gene designation" value="ETF1"/>
</dbReference>
<dbReference type="eggNOG" id="KOG0688">
    <property type="taxonomic scope" value="Eukaryota"/>
</dbReference>
<dbReference type="GeneTree" id="ENSGT00390000009004"/>
<dbReference type="HOGENOM" id="CLU_035759_2_1_1"/>
<dbReference type="InParanoid" id="Q0VCX5"/>
<dbReference type="OMA" id="RCNGSEE"/>
<dbReference type="OrthoDB" id="10254527at2759"/>
<dbReference type="TreeFam" id="TF105672"/>
<dbReference type="Reactome" id="R-BTA-72764">
    <property type="pathway name" value="Eukaryotic Translation Termination"/>
</dbReference>
<dbReference type="Reactome" id="R-BTA-9629569">
    <property type="pathway name" value="Protein hydroxylation"/>
</dbReference>
<dbReference type="Reactome" id="R-BTA-975956">
    <property type="pathway name" value="Nonsense Mediated Decay (NMD) independent of the Exon Junction Complex (EJC)"/>
</dbReference>
<dbReference type="Reactome" id="R-BTA-975957">
    <property type="pathway name" value="Nonsense Mediated Decay (NMD) enhanced by the Exon Junction Complex (EJC)"/>
</dbReference>
<dbReference type="Proteomes" id="UP000009136">
    <property type="component" value="Chromosome 7"/>
</dbReference>
<dbReference type="Bgee" id="ENSBTAG00000011415">
    <property type="expression patterns" value="Expressed in milk and 106 other cell types or tissues"/>
</dbReference>
<dbReference type="GO" id="GO:0005737">
    <property type="term" value="C:cytoplasm"/>
    <property type="evidence" value="ECO:0000250"/>
    <property type="project" value="UniProtKB"/>
</dbReference>
<dbReference type="GO" id="GO:0005829">
    <property type="term" value="C:cytosol"/>
    <property type="evidence" value="ECO:0000318"/>
    <property type="project" value="GO_Central"/>
</dbReference>
<dbReference type="GO" id="GO:0022626">
    <property type="term" value="C:cytosolic ribosome"/>
    <property type="evidence" value="ECO:0007669"/>
    <property type="project" value="Ensembl"/>
</dbReference>
<dbReference type="GO" id="GO:0018444">
    <property type="term" value="C:translation release factor complex"/>
    <property type="evidence" value="ECO:0000318"/>
    <property type="project" value="GO_Central"/>
</dbReference>
<dbReference type="GO" id="GO:0004045">
    <property type="term" value="F:peptidyl-tRNA hydrolase activity"/>
    <property type="evidence" value="ECO:0007669"/>
    <property type="project" value="Ensembl"/>
</dbReference>
<dbReference type="GO" id="GO:1990825">
    <property type="term" value="F:sequence-specific mRNA binding"/>
    <property type="evidence" value="ECO:0000318"/>
    <property type="project" value="GO_Central"/>
</dbReference>
<dbReference type="GO" id="GO:0016149">
    <property type="term" value="F:translation release factor activity, codon specific"/>
    <property type="evidence" value="ECO:0000318"/>
    <property type="project" value="GO_Central"/>
</dbReference>
<dbReference type="GO" id="GO:0008079">
    <property type="term" value="F:translation termination factor activity"/>
    <property type="evidence" value="ECO:0000250"/>
    <property type="project" value="UniProtKB"/>
</dbReference>
<dbReference type="GO" id="GO:0002184">
    <property type="term" value="P:cytoplasmic translational termination"/>
    <property type="evidence" value="ECO:0000318"/>
    <property type="project" value="GO_Central"/>
</dbReference>
<dbReference type="GO" id="GO:0000184">
    <property type="term" value="P:nuclear-transcribed mRNA catabolic process, nonsense-mediated decay"/>
    <property type="evidence" value="ECO:0007669"/>
    <property type="project" value="UniProtKB-KW"/>
</dbReference>
<dbReference type="GO" id="GO:0006449">
    <property type="term" value="P:regulation of translational termination"/>
    <property type="evidence" value="ECO:0000250"/>
    <property type="project" value="UniProtKB"/>
</dbReference>
<dbReference type="FunFam" id="3.30.1330.30:FF:000009">
    <property type="entry name" value="Eukaryotic peptide chain release factor subunit 1"/>
    <property type="match status" value="1"/>
</dbReference>
<dbReference type="FunFam" id="3.30.420.60:FF:000001">
    <property type="entry name" value="Eukaryotic peptide chain release factor subunit 1"/>
    <property type="match status" value="1"/>
</dbReference>
<dbReference type="FunFam" id="3.30.960.10:FF:000001">
    <property type="entry name" value="Eukaryotic peptide chain release factor subunit 1"/>
    <property type="match status" value="1"/>
</dbReference>
<dbReference type="Gene3D" id="3.30.1330.30">
    <property type="match status" value="1"/>
</dbReference>
<dbReference type="Gene3D" id="3.30.960.10">
    <property type="entry name" value="eRF1 domain 1"/>
    <property type="match status" value="1"/>
</dbReference>
<dbReference type="Gene3D" id="3.30.420.60">
    <property type="entry name" value="eRF1 domain 2"/>
    <property type="match status" value="1"/>
</dbReference>
<dbReference type="InterPro" id="IPR042226">
    <property type="entry name" value="eFR1_2_sf"/>
</dbReference>
<dbReference type="InterPro" id="IPR005140">
    <property type="entry name" value="eRF1_1_Pelota"/>
</dbReference>
<dbReference type="InterPro" id="IPR024049">
    <property type="entry name" value="eRF1_1_sf"/>
</dbReference>
<dbReference type="InterPro" id="IPR005141">
    <property type="entry name" value="eRF1_2"/>
</dbReference>
<dbReference type="InterPro" id="IPR005142">
    <property type="entry name" value="eRF1_3"/>
</dbReference>
<dbReference type="InterPro" id="IPR004403">
    <property type="entry name" value="Peptide_chain-rel_eRF1/aRF1"/>
</dbReference>
<dbReference type="InterPro" id="IPR029064">
    <property type="entry name" value="Ribosomal_eL30-like_sf"/>
</dbReference>
<dbReference type="NCBIfam" id="TIGR03676">
    <property type="entry name" value="aRF1_eRF1"/>
    <property type="match status" value="1"/>
</dbReference>
<dbReference type="PANTHER" id="PTHR10113">
    <property type="entry name" value="PEPTIDE CHAIN RELEASE FACTOR SUBUNIT 1"/>
    <property type="match status" value="1"/>
</dbReference>
<dbReference type="Pfam" id="PF03463">
    <property type="entry name" value="eRF1_1"/>
    <property type="match status" value="1"/>
</dbReference>
<dbReference type="Pfam" id="PF03464">
    <property type="entry name" value="eRF1_2"/>
    <property type="match status" value="1"/>
</dbReference>
<dbReference type="Pfam" id="PF03465">
    <property type="entry name" value="eRF1_3"/>
    <property type="match status" value="1"/>
</dbReference>
<dbReference type="SMART" id="SM01194">
    <property type="entry name" value="eRF1_1"/>
    <property type="match status" value="1"/>
</dbReference>
<dbReference type="SUPFAM" id="SSF55315">
    <property type="entry name" value="L30e-like"/>
    <property type="match status" value="1"/>
</dbReference>
<dbReference type="SUPFAM" id="SSF55481">
    <property type="entry name" value="N-terminal domain of eukaryotic peptide chain release factor subunit 1, ERF1"/>
    <property type="match status" value="1"/>
</dbReference>
<dbReference type="SUPFAM" id="SSF53137">
    <property type="entry name" value="Translational machinery components"/>
    <property type="match status" value="1"/>
</dbReference>
<proteinExistence type="evidence at transcript level"/>
<organism>
    <name type="scientific">Bos taurus</name>
    <name type="common">Bovine</name>
    <dbReference type="NCBI Taxonomy" id="9913"/>
    <lineage>
        <taxon>Eukaryota</taxon>
        <taxon>Metazoa</taxon>
        <taxon>Chordata</taxon>
        <taxon>Craniata</taxon>
        <taxon>Vertebrata</taxon>
        <taxon>Euteleostomi</taxon>
        <taxon>Mammalia</taxon>
        <taxon>Eutheria</taxon>
        <taxon>Laurasiatheria</taxon>
        <taxon>Artiodactyla</taxon>
        <taxon>Ruminantia</taxon>
        <taxon>Pecora</taxon>
        <taxon>Bovidae</taxon>
        <taxon>Bovinae</taxon>
        <taxon>Bos</taxon>
    </lineage>
</organism>
<protein>
    <recommendedName>
        <fullName>Eukaryotic peptide chain release factor subunit 1</fullName>
        <shortName>Eukaryotic release factor 1</shortName>
        <shortName>eRF1</shortName>
    </recommendedName>
</protein>
<comment type="function">
    <text evidence="1">Component of the eRF1-eRF3-GTP ternary complex, a ternary complex that mediates translation termination in response to the termination codons. The eRF1-eRF3-GTP complex binds to a stop codon in the ribosomal A-site. ETF1/ERF1 is responsible for stop codon recognition and inducing hydrolysis of peptidyl-tRNA. Following GTP hydrolysis, eRF3 (GSPT1/ERF3A or GSPT2/ERF3B) dissociates, permitting ETF1/eRF1 to accommodate fully in the A-site, followed by hydrolysis of peptidyl-tRNA. Component of the transient SURF complex which recruits UPF1 to stalled ribosomes in the context of nonsense-mediated decay (NMD) of mRNAs containing premature stop codons. Required for SHFL-mediated translation termination which inhibits programmed ribosomal frameshifting (-1PRF) of mRNA from viruses and cellular genes.</text>
</comment>
<comment type="subunit">
    <text evidence="1">Component of the eRF1-eRF3-GTP ternary complex, composed of ETF1/ERF1 and eRF3 (GSPT1/ERF3A or GSPT2/ERF3B) and GTP. Component of the transient SURF (SMG1-UPF1-eRF1-eRF3) complex. Interacts with JMJD4. The ETF1-GSPT1 complex interacts with JMJD4.</text>
</comment>
<comment type="subcellular location">
    <subcellularLocation>
        <location evidence="1">Cytoplasm</location>
    </subcellularLocation>
</comment>
<comment type="PTM">
    <text evidence="1">Hydroxylation at Lys-63 by JMJD4 promotes its translational termination efficiency.</text>
</comment>
<comment type="PTM">
    <text evidence="1">Methylated at Gln-185 by N6AMT1.</text>
</comment>
<comment type="PTM">
    <text evidence="1">Ubiquitinated at Lys-279 via 'Lys-6'-linked polyubiquitin chains by RNF14 and RNF25 in response to ribosome collisions (ribosome stalling), leading to its degradation by the proteasome and rescue of stalled ribosomes.</text>
</comment>
<comment type="similarity">
    <text evidence="2">Belongs to the eukaryotic release factor 1 family.</text>
</comment>